<dbReference type="EMBL" id="AL589931">
    <property type="status" value="NOT_ANNOTATED_CDS"/>
    <property type="molecule type" value="Genomic_DNA"/>
</dbReference>
<dbReference type="EMBL" id="CH471051">
    <property type="protein sequence ID" value="EAW47653.1"/>
    <property type="molecule type" value="Genomic_DNA"/>
</dbReference>
<dbReference type="EMBL" id="BC085612">
    <property type="protein sequence ID" value="AAH85612.1"/>
    <property type="molecule type" value="mRNA"/>
</dbReference>
<dbReference type="EMBL" id="BC100830">
    <property type="protein sequence ID" value="AAI00831.1"/>
    <property type="molecule type" value="mRNA"/>
</dbReference>
<dbReference type="EMBL" id="BC100831">
    <property type="protein sequence ID" value="AAI00832.1"/>
    <property type="molecule type" value="mRNA"/>
</dbReference>
<dbReference type="CCDS" id="CCDS34563.1">
    <molecule id="Q4VX76-2"/>
</dbReference>
<dbReference type="CCDS" id="CCDS56458.1">
    <molecule id="Q4VX76-1"/>
</dbReference>
<dbReference type="RefSeq" id="NP_001009991.2">
    <molecule id="Q4VX76-2"/>
    <property type="nucleotide sequence ID" value="NM_001009991.4"/>
</dbReference>
<dbReference type="RefSeq" id="NP_001229313.1">
    <molecule id="Q4VX76-1"/>
    <property type="nucleotide sequence ID" value="NM_001242384.2"/>
</dbReference>
<dbReference type="RefSeq" id="NP_001229323.1">
    <molecule id="Q4VX76-1"/>
    <property type="nucleotide sequence ID" value="NM_001242394.2"/>
</dbReference>
<dbReference type="RefSeq" id="NP_001229324.1">
    <molecule id="Q4VX76-2"/>
    <property type="nucleotide sequence ID" value="NM_001242395.2"/>
</dbReference>
<dbReference type="RefSeq" id="NP_001305674.1">
    <property type="nucleotide sequence ID" value="NM_001318745.1"/>
</dbReference>
<dbReference type="RefSeq" id="XP_005267272.1">
    <property type="nucleotide sequence ID" value="XM_005267215.4"/>
</dbReference>
<dbReference type="RefSeq" id="XP_006715668.1">
    <property type="nucleotide sequence ID" value="XM_006715605.3"/>
</dbReference>
<dbReference type="RefSeq" id="XP_006715669.1">
    <molecule id="Q4VX76-1"/>
    <property type="nucleotide sequence ID" value="XM_006715606.4"/>
</dbReference>
<dbReference type="RefSeq" id="XP_011534556.1">
    <molecule id="Q4VX76-1"/>
    <property type="nucleotide sequence ID" value="XM_011536254.3"/>
</dbReference>
<dbReference type="RefSeq" id="XP_047275505.1">
    <molecule id="Q4VX76-1"/>
    <property type="nucleotide sequence ID" value="XM_047419549.1"/>
</dbReference>
<dbReference type="RefSeq" id="XP_047275506.1">
    <molecule id="Q4VX76-1"/>
    <property type="nucleotide sequence ID" value="XM_047419550.1"/>
</dbReference>
<dbReference type="RefSeq" id="XP_047275507.1">
    <molecule id="Q4VX76-1"/>
    <property type="nucleotide sequence ID" value="XM_047419551.1"/>
</dbReference>
<dbReference type="RefSeq" id="XP_047275508.1">
    <molecule id="Q4VX76-1"/>
    <property type="nucleotide sequence ID" value="XM_047419552.1"/>
</dbReference>
<dbReference type="RefSeq" id="XP_047275509.1">
    <molecule id="Q4VX76-1"/>
    <property type="nucleotide sequence ID" value="XM_047419553.1"/>
</dbReference>
<dbReference type="RefSeq" id="XP_047275510.1">
    <molecule id="Q4VX76-2"/>
    <property type="nucleotide sequence ID" value="XM_047419554.1"/>
</dbReference>
<dbReference type="RefSeq" id="XP_047275511.1">
    <molecule id="Q4VX76-2"/>
    <property type="nucleotide sequence ID" value="XM_047419555.1"/>
</dbReference>
<dbReference type="RefSeq" id="XP_047275512.1">
    <molecule id="Q4VX76-2"/>
    <property type="nucleotide sequence ID" value="XM_047419556.1"/>
</dbReference>
<dbReference type="RefSeq" id="XP_047275513.1">
    <molecule id="Q4VX76-2"/>
    <property type="nucleotide sequence ID" value="XM_047419557.1"/>
</dbReference>
<dbReference type="RefSeq" id="XP_047275514.1">
    <molecule id="Q4VX76-2"/>
    <property type="nucleotide sequence ID" value="XM_047419558.1"/>
</dbReference>
<dbReference type="SMR" id="Q4VX76"/>
<dbReference type="BioGRID" id="125119">
    <property type="interactions" value="5"/>
</dbReference>
<dbReference type="CORUM" id="Q4VX76"/>
<dbReference type="FunCoup" id="Q4VX76">
    <property type="interactions" value="228"/>
</dbReference>
<dbReference type="IntAct" id="Q4VX76">
    <property type="interactions" value="6"/>
</dbReference>
<dbReference type="MINT" id="Q4VX76"/>
<dbReference type="STRING" id="9606.ENSP00000483936"/>
<dbReference type="GlyGen" id="Q4VX76">
    <property type="glycosylation" value="3 sites, 1 O-linked glycan (1 site)"/>
</dbReference>
<dbReference type="iPTMnet" id="Q4VX76"/>
<dbReference type="PhosphoSitePlus" id="Q4VX76"/>
<dbReference type="BioMuta" id="SYTL3"/>
<dbReference type="DMDM" id="259016380"/>
<dbReference type="jPOST" id="Q4VX76"/>
<dbReference type="MassIVE" id="Q4VX76"/>
<dbReference type="PaxDb" id="9606-ENSP00000483936"/>
<dbReference type="PeptideAtlas" id="Q4VX76"/>
<dbReference type="ProteomicsDB" id="62320">
    <molecule id="Q4VX76-1"/>
</dbReference>
<dbReference type="ProteomicsDB" id="62321">
    <molecule id="Q4VX76-2"/>
</dbReference>
<dbReference type="Antibodypedia" id="33442">
    <property type="antibodies" value="107 antibodies from 19 providers"/>
</dbReference>
<dbReference type="DNASU" id="94120"/>
<dbReference type="Ensembl" id="ENST00000360448.8">
    <molecule id="Q4VX76-1"/>
    <property type="protein sequence ID" value="ENSP00000353631.4"/>
    <property type="gene ID" value="ENSG00000164674.17"/>
</dbReference>
<dbReference type="Ensembl" id="ENST00000367081.7">
    <molecule id="Q4VX76-2"/>
    <property type="protein sequence ID" value="ENSP00000356048.4"/>
    <property type="gene ID" value="ENSG00000164674.17"/>
</dbReference>
<dbReference type="Ensembl" id="ENST00000611299.5">
    <molecule id="Q4VX76-1"/>
    <property type="protein sequence ID" value="ENSP00000483936.1"/>
    <property type="gene ID" value="ENSG00000164674.17"/>
</dbReference>
<dbReference type="GeneID" id="94120"/>
<dbReference type="KEGG" id="hsa:94120"/>
<dbReference type="MANE-Select" id="ENST00000611299.5">
    <property type="protein sequence ID" value="ENSP00000483936.1"/>
    <property type="RefSeq nucleotide sequence ID" value="NM_001242394.2"/>
    <property type="RefSeq protein sequence ID" value="NP_001229323.1"/>
</dbReference>
<dbReference type="UCSC" id="uc003qrp.3">
    <molecule id="Q4VX76-1"/>
    <property type="organism name" value="human"/>
</dbReference>
<dbReference type="AGR" id="HGNC:15587"/>
<dbReference type="CTD" id="94120"/>
<dbReference type="DisGeNET" id="94120"/>
<dbReference type="GeneCards" id="SYTL3"/>
<dbReference type="HGNC" id="HGNC:15587">
    <property type="gene designation" value="SYTL3"/>
</dbReference>
<dbReference type="HPA" id="ENSG00000164674">
    <property type="expression patterns" value="Tissue enhanced (choroid)"/>
</dbReference>
<dbReference type="MIM" id="620973">
    <property type="type" value="gene"/>
</dbReference>
<dbReference type="neXtProt" id="NX_Q4VX76"/>
<dbReference type="OpenTargets" id="ENSG00000164674"/>
<dbReference type="PharmGKB" id="PA37986"/>
<dbReference type="VEuPathDB" id="HostDB:ENSG00000164674"/>
<dbReference type="eggNOG" id="KOG1028">
    <property type="taxonomic scope" value="Eukaryota"/>
</dbReference>
<dbReference type="GeneTree" id="ENSGT00940000160610"/>
<dbReference type="HOGENOM" id="CLU_002711_0_0_1"/>
<dbReference type="InParanoid" id="Q4VX76"/>
<dbReference type="OMA" id="RKKKCNP"/>
<dbReference type="OrthoDB" id="195679at2759"/>
<dbReference type="PAN-GO" id="Q4VX76">
    <property type="GO annotations" value="4 GO annotations based on evolutionary models"/>
</dbReference>
<dbReference type="PhylomeDB" id="Q4VX76"/>
<dbReference type="TreeFam" id="TF341184"/>
<dbReference type="PathwayCommons" id="Q4VX76"/>
<dbReference type="SignaLink" id="Q4VX76"/>
<dbReference type="BioGRID-ORCS" id="94120">
    <property type="hits" value="14 hits in 1160 CRISPR screens"/>
</dbReference>
<dbReference type="ChiTaRS" id="SYTL3">
    <property type="organism name" value="human"/>
</dbReference>
<dbReference type="GenomeRNAi" id="94120"/>
<dbReference type="Pharos" id="Q4VX76">
    <property type="development level" value="Tbio"/>
</dbReference>
<dbReference type="PRO" id="PR:Q4VX76"/>
<dbReference type="Proteomes" id="UP000005640">
    <property type="component" value="Chromosome 6"/>
</dbReference>
<dbReference type="RNAct" id="Q4VX76">
    <property type="molecule type" value="protein"/>
</dbReference>
<dbReference type="Bgee" id="ENSG00000164674">
    <property type="expression patterns" value="Expressed in secondary oocyte and 137 other cell types or tissues"/>
</dbReference>
<dbReference type="GO" id="GO:0070382">
    <property type="term" value="C:exocytic vesicle"/>
    <property type="evidence" value="ECO:0000318"/>
    <property type="project" value="GO_Central"/>
</dbReference>
<dbReference type="GO" id="GO:0005886">
    <property type="term" value="C:plasma membrane"/>
    <property type="evidence" value="ECO:0000318"/>
    <property type="project" value="GO_Central"/>
</dbReference>
<dbReference type="GO" id="GO:0005544">
    <property type="term" value="F:calcium-dependent phospholipid binding"/>
    <property type="evidence" value="ECO:0007669"/>
    <property type="project" value="Ensembl"/>
</dbReference>
<dbReference type="GO" id="GO:0042043">
    <property type="term" value="F:neurexin family protein binding"/>
    <property type="evidence" value="ECO:0000318"/>
    <property type="project" value="GO_Central"/>
</dbReference>
<dbReference type="GO" id="GO:0031267">
    <property type="term" value="F:small GTPase binding"/>
    <property type="evidence" value="ECO:0007669"/>
    <property type="project" value="InterPro"/>
</dbReference>
<dbReference type="GO" id="GO:0006887">
    <property type="term" value="P:exocytosis"/>
    <property type="evidence" value="ECO:0000318"/>
    <property type="project" value="GO_Central"/>
</dbReference>
<dbReference type="GO" id="GO:0006886">
    <property type="term" value="P:intracellular protein transport"/>
    <property type="evidence" value="ECO:0007669"/>
    <property type="project" value="InterPro"/>
</dbReference>
<dbReference type="CDD" id="cd08392">
    <property type="entry name" value="C2A_SLP-3"/>
    <property type="match status" value="1"/>
</dbReference>
<dbReference type="CDD" id="cd04020">
    <property type="entry name" value="C2B_SLP_1-2-3-4"/>
    <property type="match status" value="1"/>
</dbReference>
<dbReference type="CDD" id="cd15765">
    <property type="entry name" value="FYVE_Slp3"/>
    <property type="match status" value="1"/>
</dbReference>
<dbReference type="FunFam" id="2.60.40.150:FF:000152">
    <property type="entry name" value="Synaptotagmin like 3"/>
    <property type="match status" value="1"/>
</dbReference>
<dbReference type="FunFam" id="2.60.40.150:FF:000006">
    <property type="entry name" value="Synaptotagmin-like 5, isoform CRA_a"/>
    <property type="match status" value="1"/>
</dbReference>
<dbReference type="FunFam" id="3.30.40.10:FF:000018">
    <property type="entry name" value="Synaptotagmin-like 5, isoform CRA_a"/>
    <property type="match status" value="1"/>
</dbReference>
<dbReference type="Gene3D" id="2.60.40.150">
    <property type="entry name" value="C2 domain"/>
    <property type="match status" value="2"/>
</dbReference>
<dbReference type="Gene3D" id="3.30.40.10">
    <property type="entry name" value="Zinc/RING finger domain, C3HC4 (zinc finger)"/>
    <property type="match status" value="1"/>
</dbReference>
<dbReference type="InterPro" id="IPR000008">
    <property type="entry name" value="C2_dom"/>
</dbReference>
<dbReference type="InterPro" id="IPR035892">
    <property type="entry name" value="C2_domain_sf"/>
</dbReference>
<dbReference type="InterPro" id="IPR041282">
    <property type="entry name" value="FYVE_2"/>
</dbReference>
<dbReference type="InterPro" id="IPR010911">
    <property type="entry name" value="Rab_BD"/>
</dbReference>
<dbReference type="InterPro" id="IPR043567">
    <property type="entry name" value="SYTL1-5_C2B"/>
</dbReference>
<dbReference type="InterPro" id="IPR011011">
    <property type="entry name" value="Znf_FYVE_PHD"/>
</dbReference>
<dbReference type="InterPro" id="IPR013083">
    <property type="entry name" value="Znf_RING/FYVE/PHD"/>
</dbReference>
<dbReference type="PANTHER" id="PTHR45716">
    <property type="entry name" value="BITESIZE, ISOFORM I"/>
    <property type="match status" value="1"/>
</dbReference>
<dbReference type="PANTHER" id="PTHR45716:SF2">
    <property type="entry name" value="BITESIZE, ISOFORM I"/>
    <property type="match status" value="1"/>
</dbReference>
<dbReference type="Pfam" id="PF00168">
    <property type="entry name" value="C2"/>
    <property type="match status" value="2"/>
</dbReference>
<dbReference type="Pfam" id="PF02318">
    <property type="entry name" value="FYVE_2"/>
    <property type="match status" value="1"/>
</dbReference>
<dbReference type="SMART" id="SM00239">
    <property type="entry name" value="C2"/>
    <property type="match status" value="2"/>
</dbReference>
<dbReference type="SUPFAM" id="SSF49562">
    <property type="entry name" value="C2 domain (Calcium/lipid-binding domain, CaLB)"/>
    <property type="match status" value="2"/>
</dbReference>
<dbReference type="SUPFAM" id="SSF57903">
    <property type="entry name" value="FYVE/PHD zinc finger"/>
    <property type="match status" value="1"/>
</dbReference>
<dbReference type="PROSITE" id="PS50004">
    <property type="entry name" value="C2"/>
    <property type="match status" value="2"/>
</dbReference>
<dbReference type="PROSITE" id="PS50916">
    <property type="entry name" value="RABBD"/>
    <property type="match status" value="1"/>
</dbReference>
<name>SYTL3_HUMAN</name>
<gene>
    <name type="primary">SYTL3</name>
    <name type="synonym">SLP3</name>
</gene>
<protein>
    <recommendedName>
        <fullName>Synaptotagmin-like protein 3</fullName>
    </recommendedName>
    <alternativeName>
        <fullName>Exophilin-6</fullName>
    </alternativeName>
</protein>
<comment type="function">
    <text evidence="1">May act as Rab effector protein and play a role in vesicle trafficking. Binds phospholipids in the presence of calcium ions (By similarity).</text>
</comment>
<comment type="subunit">
    <text evidence="1">Monomer. Binds NRXN1. Binds RAB27A that has been activated by GTP-binding via its N-terminus (By similarity).</text>
</comment>
<comment type="interaction">
    <interactant intactId="EBI-2840607">
        <id>Q4VX76</id>
    </interactant>
    <interactant intactId="EBI-17183751">
        <id>X5D778</id>
        <label>ANKRD11</label>
    </interactant>
    <organismsDiffer>false</organismsDiffer>
    <experiments>3</experiments>
</comment>
<comment type="interaction">
    <interactant intactId="EBI-2840607">
        <id>Q4VX76</id>
    </interactant>
    <interactant intactId="EBI-1051861">
        <id>O95190</id>
        <label>OAZ2</label>
    </interactant>
    <organismsDiffer>false</organismsDiffer>
    <experiments>3</experiments>
</comment>
<comment type="interaction">
    <interactant intactId="EBI-2840607">
        <id>Q4VX76</id>
    </interactant>
    <interactant intactId="EBI-716881">
        <id>P51159</id>
        <label>RAB27A</label>
    </interactant>
    <organismsDiffer>false</organismsDiffer>
    <experiments>5</experiments>
</comment>
<comment type="subcellular location">
    <subcellularLocation>
        <location evidence="1">Endomembrane system</location>
        <topology evidence="1">Peripheral membrane protein</topology>
    </subcellularLocation>
</comment>
<comment type="alternative products">
    <event type="alternative splicing"/>
    <isoform>
        <id>Q4VX76-1</id>
        <name>1</name>
        <sequence type="displayed"/>
    </isoform>
    <isoform>
        <id>Q4VX76-2</id>
        <name>2</name>
        <sequence type="described" ref="VSP_029403"/>
    </isoform>
</comment>
<reference key="1">
    <citation type="journal article" date="2003" name="Nature">
        <title>The DNA sequence and analysis of human chromosome 6.</title>
        <authorList>
            <person name="Mungall A.J."/>
            <person name="Palmer S.A."/>
            <person name="Sims S.K."/>
            <person name="Edwards C.A."/>
            <person name="Ashurst J.L."/>
            <person name="Wilming L."/>
            <person name="Jones M.C."/>
            <person name="Horton R."/>
            <person name="Hunt S.E."/>
            <person name="Scott C.E."/>
            <person name="Gilbert J.G.R."/>
            <person name="Clamp M.E."/>
            <person name="Bethel G."/>
            <person name="Milne S."/>
            <person name="Ainscough R."/>
            <person name="Almeida J.P."/>
            <person name="Ambrose K.D."/>
            <person name="Andrews T.D."/>
            <person name="Ashwell R.I.S."/>
            <person name="Babbage A.K."/>
            <person name="Bagguley C.L."/>
            <person name="Bailey J."/>
            <person name="Banerjee R."/>
            <person name="Barker D.J."/>
            <person name="Barlow K.F."/>
            <person name="Bates K."/>
            <person name="Beare D.M."/>
            <person name="Beasley H."/>
            <person name="Beasley O."/>
            <person name="Bird C.P."/>
            <person name="Blakey S.E."/>
            <person name="Bray-Allen S."/>
            <person name="Brook J."/>
            <person name="Brown A.J."/>
            <person name="Brown J.Y."/>
            <person name="Burford D.C."/>
            <person name="Burrill W."/>
            <person name="Burton J."/>
            <person name="Carder C."/>
            <person name="Carter N.P."/>
            <person name="Chapman J.C."/>
            <person name="Clark S.Y."/>
            <person name="Clark G."/>
            <person name="Clee C.M."/>
            <person name="Clegg S."/>
            <person name="Cobley V."/>
            <person name="Collier R.E."/>
            <person name="Collins J.E."/>
            <person name="Colman L.K."/>
            <person name="Corby N.R."/>
            <person name="Coville G.J."/>
            <person name="Culley K.M."/>
            <person name="Dhami P."/>
            <person name="Davies J."/>
            <person name="Dunn M."/>
            <person name="Earthrowl M.E."/>
            <person name="Ellington A.E."/>
            <person name="Evans K.A."/>
            <person name="Faulkner L."/>
            <person name="Francis M.D."/>
            <person name="Frankish A."/>
            <person name="Frankland J."/>
            <person name="French L."/>
            <person name="Garner P."/>
            <person name="Garnett J."/>
            <person name="Ghori M.J."/>
            <person name="Gilby L.M."/>
            <person name="Gillson C.J."/>
            <person name="Glithero R.J."/>
            <person name="Grafham D.V."/>
            <person name="Grant M."/>
            <person name="Gribble S."/>
            <person name="Griffiths C."/>
            <person name="Griffiths M.N.D."/>
            <person name="Hall R."/>
            <person name="Halls K.S."/>
            <person name="Hammond S."/>
            <person name="Harley J.L."/>
            <person name="Hart E.A."/>
            <person name="Heath P.D."/>
            <person name="Heathcott R."/>
            <person name="Holmes S.J."/>
            <person name="Howden P.J."/>
            <person name="Howe K.L."/>
            <person name="Howell G.R."/>
            <person name="Huckle E."/>
            <person name="Humphray S.J."/>
            <person name="Humphries M.D."/>
            <person name="Hunt A.R."/>
            <person name="Johnson C.M."/>
            <person name="Joy A.A."/>
            <person name="Kay M."/>
            <person name="Keenan S.J."/>
            <person name="Kimberley A.M."/>
            <person name="King A."/>
            <person name="Laird G.K."/>
            <person name="Langford C."/>
            <person name="Lawlor S."/>
            <person name="Leongamornlert D.A."/>
            <person name="Leversha M."/>
            <person name="Lloyd C.R."/>
            <person name="Lloyd D.M."/>
            <person name="Loveland J.E."/>
            <person name="Lovell J."/>
            <person name="Martin S."/>
            <person name="Mashreghi-Mohammadi M."/>
            <person name="Maslen G.L."/>
            <person name="Matthews L."/>
            <person name="McCann O.T."/>
            <person name="McLaren S.J."/>
            <person name="McLay K."/>
            <person name="McMurray A."/>
            <person name="Moore M.J.F."/>
            <person name="Mullikin J.C."/>
            <person name="Niblett D."/>
            <person name="Nickerson T."/>
            <person name="Novik K.L."/>
            <person name="Oliver K."/>
            <person name="Overton-Larty E.K."/>
            <person name="Parker A."/>
            <person name="Patel R."/>
            <person name="Pearce A.V."/>
            <person name="Peck A.I."/>
            <person name="Phillimore B.J.C.T."/>
            <person name="Phillips S."/>
            <person name="Plumb R.W."/>
            <person name="Porter K.M."/>
            <person name="Ramsey Y."/>
            <person name="Ranby S.A."/>
            <person name="Rice C.M."/>
            <person name="Ross M.T."/>
            <person name="Searle S.M."/>
            <person name="Sehra H.K."/>
            <person name="Sheridan E."/>
            <person name="Skuce C.D."/>
            <person name="Smith S."/>
            <person name="Smith M."/>
            <person name="Spraggon L."/>
            <person name="Squares S.L."/>
            <person name="Steward C.A."/>
            <person name="Sycamore N."/>
            <person name="Tamlyn-Hall G."/>
            <person name="Tester J."/>
            <person name="Theaker A.J."/>
            <person name="Thomas D.W."/>
            <person name="Thorpe A."/>
            <person name="Tracey A."/>
            <person name="Tromans A."/>
            <person name="Tubby B."/>
            <person name="Wall M."/>
            <person name="Wallis J.M."/>
            <person name="West A.P."/>
            <person name="White S.S."/>
            <person name="Whitehead S.L."/>
            <person name="Whittaker H."/>
            <person name="Wild A."/>
            <person name="Willey D.J."/>
            <person name="Wilmer T.E."/>
            <person name="Wood J.M."/>
            <person name="Wray P.W."/>
            <person name="Wyatt J.C."/>
            <person name="Young L."/>
            <person name="Younger R.M."/>
            <person name="Bentley D.R."/>
            <person name="Coulson A."/>
            <person name="Durbin R.M."/>
            <person name="Hubbard T."/>
            <person name="Sulston J.E."/>
            <person name="Dunham I."/>
            <person name="Rogers J."/>
            <person name="Beck S."/>
        </authorList>
    </citation>
    <scope>NUCLEOTIDE SEQUENCE [LARGE SCALE GENOMIC DNA]</scope>
</reference>
<reference key="2">
    <citation type="submission" date="2005-09" db="EMBL/GenBank/DDBJ databases">
        <authorList>
            <person name="Mural R.J."/>
            <person name="Istrail S."/>
            <person name="Sutton G.G."/>
            <person name="Florea L."/>
            <person name="Halpern A.L."/>
            <person name="Mobarry C.M."/>
            <person name="Lippert R."/>
            <person name="Walenz B."/>
            <person name="Shatkay H."/>
            <person name="Dew I."/>
            <person name="Miller J.R."/>
            <person name="Flanigan M.J."/>
            <person name="Edwards N.J."/>
            <person name="Bolanos R."/>
            <person name="Fasulo D."/>
            <person name="Halldorsson B.V."/>
            <person name="Hannenhalli S."/>
            <person name="Turner R."/>
            <person name="Yooseph S."/>
            <person name="Lu F."/>
            <person name="Nusskern D.R."/>
            <person name="Shue B.C."/>
            <person name="Zheng X.H."/>
            <person name="Zhong F."/>
            <person name="Delcher A.L."/>
            <person name="Huson D.H."/>
            <person name="Kravitz S.A."/>
            <person name="Mouchard L."/>
            <person name="Reinert K."/>
            <person name="Remington K.A."/>
            <person name="Clark A.G."/>
            <person name="Waterman M.S."/>
            <person name="Eichler E.E."/>
            <person name="Adams M.D."/>
            <person name="Hunkapiller M.W."/>
            <person name="Myers E.W."/>
            <person name="Venter J.C."/>
        </authorList>
    </citation>
    <scope>NUCLEOTIDE SEQUENCE [LARGE SCALE GENOMIC DNA]</scope>
    <scope>VARIANT GLN-587</scope>
</reference>
<reference key="3">
    <citation type="journal article" date="2004" name="Genome Res.">
        <title>The status, quality, and expansion of the NIH full-length cDNA project: the Mammalian Gene Collection (MGC).</title>
        <authorList>
            <consortium name="The MGC Project Team"/>
        </authorList>
    </citation>
    <scope>NUCLEOTIDE SEQUENCE [LARGE SCALE MRNA] (ISOFORMS 1 AND 2)</scope>
    <scope>VARIANT GLN-587</scope>
    <source>
        <tissue>Chondrosarcoma</tissue>
    </source>
</reference>
<accession>Q4VX76</accession>
<accession>Q496J4</accession>
<accession>Q496J6</accession>
<accession>Q5U3B9</accession>
<proteinExistence type="evidence at protein level"/>
<evidence type="ECO:0000250" key="1"/>
<evidence type="ECO:0000255" key="2">
    <source>
        <dbReference type="PROSITE-ProRule" id="PRU00041"/>
    </source>
</evidence>
<evidence type="ECO:0000255" key="3">
    <source>
        <dbReference type="PROSITE-ProRule" id="PRU00234"/>
    </source>
</evidence>
<evidence type="ECO:0000256" key="4">
    <source>
        <dbReference type="SAM" id="MobiDB-lite"/>
    </source>
</evidence>
<evidence type="ECO:0000269" key="5">
    <source>
    </source>
</evidence>
<evidence type="ECO:0000269" key="6">
    <source ref="2"/>
</evidence>
<evidence type="ECO:0000303" key="7">
    <source>
    </source>
</evidence>
<keyword id="KW-0025">Alternative splicing</keyword>
<keyword id="KW-0472">Membrane</keyword>
<keyword id="KW-1267">Proteomics identification</keyword>
<keyword id="KW-1185">Reference proteome</keyword>
<keyword id="KW-0677">Repeat</keyword>
<organism>
    <name type="scientific">Homo sapiens</name>
    <name type="common">Human</name>
    <dbReference type="NCBI Taxonomy" id="9606"/>
    <lineage>
        <taxon>Eukaryota</taxon>
        <taxon>Metazoa</taxon>
        <taxon>Chordata</taxon>
        <taxon>Craniata</taxon>
        <taxon>Vertebrata</taxon>
        <taxon>Euteleostomi</taxon>
        <taxon>Mammalia</taxon>
        <taxon>Eutheria</taxon>
        <taxon>Euarchontoglires</taxon>
        <taxon>Primates</taxon>
        <taxon>Haplorrhini</taxon>
        <taxon>Catarrhini</taxon>
        <taxon>Hominidae</taxon>
        <taxon>Homo</taxon>
    </lineage>
</organism>
<sequence>MAQEIDLSALKELEREAILQVLYRDQAVQNTEEERTRKLKTHLQHLRWKGAKNTDWEHKEKCCARCQQVLGFLLHRGAVCRGCSHRVCAQCRVFLRGTHAWKCTVCFEDRNVKIKTGEWFYEERAKKFPTGGKHETVGGQLLQSYQKLSKISVVPPTPPPVSESQCSRSPGRLQEFGQFRGFNKSVENLFLSLATHVKKLSKSQNDMTSEKHLLATGPRQCVGQTERRSQSDTAVNVTTRKVSAPDILKPLNQEDPKCSTNPILKQQNLPSSPAPSTIFSGGFRHGSLISIDSTCTEMGNFDNANVTGEIEFAIHYCFKTHSLEICIKACKNLAYGEEKKKKCNPYVKTYLLPDRSSQGKRKTGVQRNTVDPTFQETLKYQVAPAQLVTRQLQVSVWHLGTLARRVFLGEVIIPLATWDFEDSTTQSFRWHPLRAKAEKYEDSVPQSNGELTVRAKLVLPSRPRKLQEAQEGTDQPSLHGQLCLVVLGAKNLPVRPDGTLNSFVKGCLTLPDQQKLRLKSPVLRKQACPQWKHSFVFSGVTPAQLRQSSLELTVWDQALFGMNDRLLGGTRLGSKGDTAVGGDACSLSKLQWQKVLSSPNLWTDMTLVLH</sequence>
<feature type="chain" id="PRO_0000311116" description="Synaptotagmin-like protein 3">
    <location>
        <begin position="1"/>
        <end position="610"/>
    </location>
</feature>
<feature type="domain" description="RabBD" evidence="3">
    <location>
        <begin position="4"/>
        <end position="123"/>
    </location>
</feature>
<feature type="domain" description="C2 1" evidence="2">
    <location>
        <begin position="306"/>
        <end position="428"/>
    </location>
</feature>
<feature type="domain" description="C2 2" evidence="2">
    <location>
        <begin position="462"/>
        <end position="603"/>
    </location>
</feature>
<feature type="region of interest" description="Disordered" evidence="4">
    <location>
        <begin position="219"/>
        <end position="239"/>
    </location>
</feature>
<feature type="splice variant" id="VSP_029403" description="In isoform 2." evidence="7">
    <location>
        <begin position="172"/>
        <end position="239"/>
    </location>
</feature>
<feature type="sequence variant" id="VAR_037137" description="In dbSNP:rs901363.">
    <original>P</original>
    <variation>S</variation>
    <location>
        <position position="414"/>
    </location>
</feature>
<feature type="sequence variant" id="VAR_037138" description="In dbSNP:rs2291388.">
    <original>V</original>
    <variation>I</variation>
    <location>
        <position position="540"/>
    </location>
</feature>
<feature type="sequence variant" id="VAR_037139" description="In dbSNP:rs3123101." evidence="5 6">
    <original>L</original>
    <variation>Q</variation>
    <location>
        <position position="587"/>
    </location>
</feature>